<keyword id="KW-0963">Cytoplasm</keyword>
<keyword id="KW-1185">Reference proteome</keyword>
<keyword id="KW-0690">Ribosome biogenesis</keyword>
<evidence type="ECO:0000255" key="1">
    <source>
        <dbReference type="HAMAP-Rule" id="MF_01077"/>
    </source>
</evidence>
<evidence type="ECO:0000305" key="2"/>
<organism>
    <name type="scientific">Shewanella sediminis (strain HAW-EB3)</name>
    <dbReference type="NCBI Taxonomy" id="425104"/>
    <lineage>
        <taxon>Bacteria</taxon>
        <taxon>Pseudomonadati</taxon>
        <taxon>Pseudomonadota</taxon>
        <taxon>Gammaproteobacteria</taxon>
        <taxon>Alteromonadales</taxon>
        <taxon>Shewanellaceae</taxon>
        <taxon>Shewanella</taxon>
    </lineage>
</organism>
<proteinExistence type="inferred from homology"/>
<comment type="function">
    <text evidence="1">Required for maturation of 30S ribosomal subunits.</text>
</comment>
<comment type="subcellular location">
    <subcellularLocation>
        <location evidence="1">Cytoplasm</location>
    </subcellularLocation>
</comment>
<comment type="similarity">
    <text evidence="1">Belongs to the RimP family.</text>
</comment>
<comment type="sequence caution" evidence="2">
    <conflict type="erroneous initiation">
        <sequence resource="EMBL-CDS" id="ABV37995"/>
    </conflict>
</comment>
<protein>
    <recommendedName>
        <fullName evidence="1">Ribosome maturation factor RimP</fullName>
    </recommendedName>
</protein>
<accession>A8FYS2</accession>
<gene>
    <name evidence="1" type="primary">rimP</name>
    <name type="ordered locus">Ssed_3391</name>
</gene>
<dbReference type="EMBL" id="CP000821">
    <property type="protein sequence ID" value="ABV37995.1"/>
    <property type="status" value="ALT_INIT"/>
    <property type="molecule type" value="Genomic_DNA"/>
</dbReference>
<dbReference type="RefSeq" id="WP_041421777.1">
    <property type="nucleotide sequence ID" value="NC_009831.1"/>
</dbReference>
<dbReference type="SMR" id="A8FYS2"/>
<dbReference type="STRING" id="425104.Ssed_3391"/>
<dbReference type="KEGG" id="sse:Ssed_3391"/>
<dbReference type="eggNOG" id="COG0779">
    <property type="taxonomic scope" value="Bacteria"/>
</dbReference>
<dbReference type="HOGENOM" id="CLU_070525_1_1_6"/>
<dbReference type="OrthoDB" id="9805006at2"/>
<dbReference type="Proteomes" id="UP000002015">
    <property type="component" value="Chromosome"/>
</dbReference>
<dbReference type="GO" id="GO:0005829">
    <property type="term" value="C:cytosol"/>
    <property type="evidence" value="ECO:0007669"/>
    <property type="project" value="TreeGrafter"/>
</dbReference>
<dbReference type="GO" id="GO:0000028">
    <property type="term" value="P:ribosomal small subunit assembly"/>
    <property type="evidence" value="ECO:0007669"/>
    <property type="project" value="TreeGrafter"/>
</dbReference>
<dbReference type="GO" id="GO:0006412">
    <property type="term" value="P:translation"/>
    <property type="evidence" value="ECO:0007669"/>
    <property type="project" value="TreeGrafter"/>
</dbReference>
<dbReference type="CDD" id="cd01734">
    <property type="entry name" value="YlxS_C"/>
    <property type="match status" value="1"/>
</dbReference>
<dbReference type="FunFam" id="3.30.300.70:FF:000001">
    <property type="entry name" value="Ribosome maturation factor RimP"/>
    <property type="match status" value="1"/>
</dbReference>
<dbReference type="Gene3D" id="2.30.30.180">
    <property type="entry name" value="Ribosome maturation factor RimP, C-terminal domain"/>
    <property type="match status" value="1"/>
</dbReference>
<dbReference type="Gene3D" id="3.30.300.70">
    <property type="entry name" value="RimP-like superfamily, N-terminal"/>
    <property type="match status" value="1"/>
</dbReference>
<dbReference type="HAMAP" id="MF_01077">
    <property type="entry name" value="RimP"/>
    <property type="match status" value="1"/>
</dbReference>
<dbReference type="InterPro" id="IPR003728">
    <property type="entry name" value="Ribosome_maturation_RimP"/>
</dbReference>
<dbReference type="InterPro" id="IPR028998">
    <property type="entry name" value="RimP_C"/>
</dbReference>
<dbReference type="InterPro" id="IPR036847">
    <property type="entry name" value="RimP_C_sf"/>
</dbReference>
<dbReference type="InterPro" id="IPR028989">
    <property type="entry name" value="RimP_N"/>
</dbReference>
<dbReference type="InterPro" id="IPR035956">
    <property type="entry name" value="RimP_N_sf"/>
</dbReference>
<dbReference type="NCBIfam" id="NF000927">
    <property type="entry name" value="PRK00092.1-1"/>
    <property type="match status" value="1"/>
</dbReference>
<dbReference type="PANTHER" id="PTHR33867">
    <property type="entry name" value="RIBOSOME MATURATION FACTOR RIMP"/>
    <property type="match status" value="1"/>
</dbReference>
<dbReference type="PANTHER" id="PTHR33867:SF1">
    <property type="entry name" value="RIBOSOME MATURATION FACTOR RIMP"/>
    <property type="match status" value="1"/>
</dbReference>
<dbReference type="Pfam" id="PF17384">
    <property type="entry name" value="DUF150_C"/>
    <property type="match status" value="1"/>
</dbReference>
<dbReference type="Pfam" id="PF02576">
    <property type="entry name" value="RimP_N"/>
    <property type="match status" value="1"/>
</dbReference>
<dbReference type="SUPFAM" id="SSF74942">
    <property type="entry name" value="YhbC-like, C-terminal domain"/>
    <property type="match status" value="1"/>
</dbReference>
<dbReference type="SUPFAM" id="SSF75420">
    <property type="entry name" value="YhbC-like, N-terminal domain"/>
    <property type="match status" value="1"/>
</dbReference>
<name>RIMP_SHESH</name>
<feature type="chain" id="PRO_0000384772" description="Ribosome maturation factor RimP">
    <location>
        <begin position="1"/>
        <end position="151"/>
    </location>
</feature>
<reference key="1">
    <citation type="submission" date="2007-08" db="EMBL/GenBank/DDBJ databases">
        <title>Complete sequence of Shewanella sediminis HAW-EB3.</title>
        <authorList>
            <consortium name="US DOE Joint Genome Institute"/>
            <person name="Copeland A."/>
            <person name="Lucas S."/>
            <person name="Lapidus A."/>
            <person name="Barry K."/>
            <person name="Glavina del Rio T."/>
            <person name="Dalin E."/>
            <person name="Tice H."/>
            <person name="Pitluck S."/>
            <person name="Chertkov O."/>
            <person name="Brettin T."/>
            <person name="Bruce D."/>
            <person name="Detter J.C."/>
            <person name="Han C."/>
            <person name="Schmutz J."/>
            <person name="Larimer F."/>
            <person name="Land M."/>
            <person name="Hauser L."/>
            <person name="Kyrpides N."/>
            <person name="Kim E."/>
            <person name="Zhao J.-S."/>
            <person name="Richardson P."/>
        </authorList>
    </citation>
    <scope>NUCLEOTIDE SEQUENCE [LARGE SCALE GENOMIC DNA]</scope>
    <source>
        <strain>HAW-EB3</strain>
    </source>
</reference>
<sequence length="151" mass="16684">MATIENRLEEMLKSPVEALGHTLWGLEYVQAGKHSILRVYIDNEKGIFIEDCAETSRQVSAVLDVEDPISTEYTLEVSSPGVDRPLFKAEQYAAYIDETVKIQLTMPVAGSRNLKGTITGIEGQMLSLTVDGNELIIALDNIRKGNLIAKF</sequence>